<reference key="1">
    <citation type="journal article" date="2007" name="PLoS ONE">
        <title>Genome sequencing shows that European isolates of Francisella tularensis subspecies tularensis are almost identical to US laboratory strain Schu S4.</title>
        <authorList>
            <person name="Chaudhuri R.R."/>
            <person name="Ren C.-P."/>
            <person name="Desmond L."/>
            <person name="Vincent G.A."/>
            <person name="Silman N.J."/>
            <person name="Brehm J.K."/>
            <person name="Elmore M.J."/>
            <person name="Hudson M.J."/>
            <person name="Forsman M."/>
            <person name="Isherwood K.E."/>
            <person name="Gurycova D."/>
            <person name="Minton N.P."/>
            <person name="Titball R.W."/>
            <person name="Pallen M.J."/>
            <person name="Vipond R."/>
        </authorList>
    </citation>
    <scope>NUCLEOTIDE SEQUENCE [LARGE SCALE GENOMIC DNA]</scope>
    <source>
        <strain>FSC 198</strain>
    </source>
</reference>
<protein>
    <recommendedName>
        <fullName evidence="1">Tryptophan synthase beta chain</fullName>
        <ecNumber evidence="1">4.2.1.20</ecNumber>
    </recommendedName>
</protein>
<accession>Q14FN2</accession>
<sequence>MSKLNAYFGEYGGQFVPQILVPALDQLEQEFIKAQADESFKQEFKELLQEYAGRPTALTKTRNIVKNTRTKLYLKREDLLHGGAHKTNQVLGQALLAKRMGKKEIIAETGAGQHGVATALACALLDLKCRVYMGAKDVERQSPNVFRMKLMGAEVIPVHSGSATLKDACNEALRDWSANYSKAHYLLGTAAGPHPFPTIVREFQRMIGEETKQQMLAKEGRLPDAVIACVGGGSNAIGMFADFIDEKNVKLIGVEPAGKGIETGEHGAPLKHGKTGIFFGMKAPLMQNSDGQIEESYSISAGLDFPSVGPQHAHLLAIGRAKYASATDDEALDAFKLLCKKEGIIPALESSHALAHALKLAYEDPNKEQLLVVNLSGRGDKDIFTVHDILKEKGEI</sequence>
<dbReference type="EC" id="4.2.1.20" evidence="1"/>
<dbReference type="EMBL" id="AM286280">
    <property type="protein sequence ID" value="CAL09789.1"/>
    <property type="molecule type" value="Genomic_DNA"/>
</dbReference>
<dbReference type="RefSeq" id="WP_003022755.1">
    <property type="nucleotide sequence ID" value="NC_008245.1"/>
</dbReference>
<dbReference type="SMR" id="Q14FN2"/>
<dbReference type="KEGG" id="ftf:FTF1773c"/>
<dbReference type="HOGENOM" id="CLU_016734_3_1_6"/>
<dbReference type="UniPathway" id="UPA00035">
    <property type="reaction ID" value="UER00044"/>
</dbReference>
<dbReference type="GO" id="GO:0005737">
    <property type="term" value="C:cytoplasm"/>
    <property type="evidence" value="ECO:0007669"/>
    <property type="project" value="TreeGrafter"/>
</dbReference>
<dbReference type="GO" id="GO:0004834">
    <property type="term" value="F:tryptophan synthase activity"/>
    <property type="evidence" value="ECO:0007669"/>
    <property type="project" value="UniProtKB-UniRule"/>
</dbReference>
<dbReference type="CDD" id="cd06446">
    <property type="entry name" value="Trp-synth_B"/>
    <property type="match status" value="1"/>
</dbReference>
<dbReference type="FunFam" id="3.40.50.1100:FF:000001">
    <property type="entry name" value="Tryptophan synthase beta chain"/>
    <property type="match status" value="1"/>
</dbReference>
<dbReference type="FunFam" id="3.40.50.1100:FF:000004">
    <property type="entry name" value="Tryptophan synthase beta chain"/>
    <property type="match status" value="1"/>
</dbReference>
<dbReference type="Gene3D" id="3.40.50.1100">
    <property type="match status" value="2"/>
</dbReference>
<dbReference type="HAMAP" id="MF_00133">
    <property type="entry name" value="Trp_synth_beta"/>
    <property type="match status" value="1"/>
</dbReference>
<dbReference type="InterPro" id="IPR006653">
    <property type="entry name" value="Trp_synth_b_CS"/>
</dbReference>
<dbReference type="InterPro" id="IPR006654">
    <property type="entry name" value="Trp_synth_beta"/>
</dbReference>
<dbReference type="InterPro" id="IPR023026">
    <property type="entry name" value="Trp_synth_beta/beta-like"/>
</dbReference>
<dbReference type="InterPro" id="IPR001926">
    <property type="entry name" value="TrpB-like_PALP"/>
</dbReference>
<dbReference type="InterPro" id="IPR036052">
    <property type="entry name" value="TrpB-like_PALP_sf"/>
</dbReference>
<dbReference type="NCBIfam" id="TIGR00263">
    <property type="entry name" value="trpB"/>
    <property type="match status" value="1"/>
</dbReference>
<dbReference type="PANTHER" id="PTHR48077:SF3">
    <property type="entry name" value="TRYPTOPHAN SYNTHASE"/>
    <property type="match status" value="1"/>
</dbReference>
<dbReference type="PANTHER" id="PTHR48077">
    <property type="entry name" value="TRYPTOPHAN SYNTHASE-RELATED"/>
    <property type="match status" value="1"/>
</dbReference>
<dbReference type="Pfam" id="PF00291">
    <property type="entry name" value="PALP"/>
    <property type="match status" value="1"/>
</dbReference>
<dbReference type="PIRSF" id="PIRSF001413">
    <property type="entry name" value="Trp_syn_beta"/>
    <property type="match status" value="1"/>
</dbReference>
<dbReference type="SUPFAM" id="SSF53686">
    <property type="entry name" value="Tryptophan synthase beta subunit-like PLP-dependent enzymes"/>
    <property type="match status" value="1"/>
</dbReference>
<dbReference type="PROSITE" id="PS00168">
    <property type="entry name" value="TRP_SYNTHASE_BETA"/>
    <property type="match status" value="1"/>
</dbReference>
<evidence type="ECO:0000255" key="1">
    <source>
        <dbReference type="HAMAP-Rule" id="MF_00133"/>
    </source>
</evidence>
<keyword id="KW-0028">Amino-acid biosynthesis</keyword>
<keyword id="KW-0057">Aromatic amino acid biosynthesis</keyword>
<keyword id="KW-0456">Lyase</keyword>
<keyword id="KW-0663">Pyridoxal phosphate</keyword>
<keyword id="KW-0822">Tryptophan biosynthesis</keyword>
<organism>
    <name type="scientific">Francisella tularensis subsp. tularensis (strain FSC 198)</name>
    <dbReference type="NCBI Taxonomy" id="393115"/>
    <lineage>
        <taxon>Bacteria</taxon>
        <taxon>Pseudomonadati</taxon>
        <taxon>Pseudomonadota</taxon>
        <taxon>Gammaproteobacteria</taxon>
        <taxon>Thiotrichales</taxon>
        <taxon>Francisellaceae</taxon>
        <taxon>Francisella</taxon>
    </lineage>
</organism>
<comment type="function">
    <text evidence="1">The beta subunit is responsible for the synthesis of L-tryptophan from indole and L-serine.</text>
</comment>
<comment type="catalytic activity">
    <reaction evidence="1">
        <text>(1S,2R)-1-C-(indol-3-yl)glycerol 3-phosphate + L-serine = D-glyceraldehyde 3-phosphate + L-tryptophan + H2O</text>
        <dbReference type="Rhea" id="RHEA:10532"/>
        <dbReference type="ChEBI" id="CHEBI:15377"/>
        <dbReference type="ChEBI" id="CHEBI:33384"/>
        <dbReference type="ChEBI" id="CHEBI:57912"/>
        <dbReference type="ChEBI" id="CHEBI:58866"/>
        <dbReference type="ChEBI" id="CHEBI:59776"/>
        <dbReference type="EC" id="4.2.1.20"/>
    </reaction>
</comment>
<comment type="cofactor">
    <cofactor evidence="1">
        <name>pyridoxal 5'-phosphate</name>
        <dbReference type="ChEBI" id="CHEBI:597326"/>
    </cofactor>
</comment>
<comment type="pathway">
    <text evidence="1">Amino-acid biosynthesis; L-tryptophan biosynthesis; L-tryptophan from chorismate: step 5/5.</text>
</comment>
<comment type="subunit">
    <text evidence="1">Tetramer of two alpha and two beta chains.</text>
</comment>
<comment type="similarity">
    <text evidence="1">Belongs to the TrpB family.</text>
</comment>
<gene>
    <name evidence="1" type="primary">trpB</name>
    <name type="ordered locus">FTF1773c</name>
</gene>
<feature type="chain" id="PRO_1000018340" description="Tryptophan synthase beta chain">
    <location>
        <begin position="1"/>
        <end position="396"/>
    </location>
</feature>
<feature type="modified residue" description="N6-(pyridoxal phosphate)lysine" evidence="1">
    <location>
        <position position="86"/>
    </location>
</feature>
<name>TRPB_FRAT1</name>
<proteinExistence type="inferred from homology"/>